<keyword id="KW-0997">Cell inner membrane</keyword>
<keyword id="KW-1003">Cell membrane</keyword>
<keyword id="KW-0472">Membrane</keyword>
<keyword id="KW-0653">Protein transport</keyword>
<keyword id="KW-0811">Translocation</keyword>
<keyword id="KW-0812">Transmembrane</keyword>
<keyword id="KW-1133">Transmembrane helix</keyword>
<keyword id="KW-0813">Transport</keyword>
<evidence type="ECO:0000255" key="1">
    <source>
        <dbReference type="HAMAP-Rule" id="MF_00237"/>
    </source>
</evidence>
<evidence type="ECO:0000256" key="2">
    <source>
        <dbReference type="SAM" id="MobiDB-lite"/>
    </source>
</evidence>
<accession>Q0HE97</accession>
<dbReference type="EMBL" id="CP000446">
    <property type="protein sequence ID" value="ABI40620.1"/>
    <property type="molecule type" value="Genomic_DNA"/>
</dbReference>
<dbReference type="RefSeq" id="WP_011624284.1">
    <property type="nucleotide sequence ID" value="NC_008321.1"/>
</dbReference>
<dbReference type="SMR" id="Q0HE97"/>
<dbReference type="KEGG" id="she:Shewmr4_3555"/>
<dbReference type="HOGENOM" id="CLU_086034_1_0_6"/>
<dbReference type="GO" id="GO:0033281">
    <property type="term" value="C:TAT protein transport complex"/>
    <property type="evidence" value="ECO:0007669"/>
    <property type="project" value="UniProtKB-UniRule"/>
</dbReference>
<dbReference type="GO" id="GO:0008320">
    <property type="term" value="F:protein transmembrane transporter activity"/>
    <property type="evidence" value="ECO:0007669"/>
    <property type="project" value="UniProtKB-UniRule"/>
</dbReference>
<dbReference type="GO" id="GO:0043953">
    <property type="term" value="P:protein transport by the Tat complex"/>
    <property type="evidence" value="ECO:0007669"/>
    <property type="project" value="UniProtKB-UniRule"/>
</dbReference>
<dbReference type="Gene3D" id="1.20.5.3310">
    <property type="match status" value="1"/>
</dbReference>
<dbReference type="HAMAP" id="MF_00237">
    <property type="entry name" value="TatB"/>
    <property type="match status" value="1"/>
</dbReference>
<dbReference type="InterPro" id="IPR003369">
    <property type="entry name" value="TatA/B/E"/>
</dbReference>
<dbReference type="InterPro" id="IPR018448">
    <property type="entry name" value="TatB"/>
</dbReference>
<dbReference type="NCBIfam" id="TIGR01410">
    <property type="entry name" value="tatB"/>
    <property type="match status" value="1"/>
</dbReference>
<dbReference type="PANTHER" id="PTHR33162">
    <property type="entry name" value="SEC-INDEPENDENT PROTEIN TRANSLOCASE PROTEIN TATA, CHLOROPLASTIC"/>
    <property type="match status" value="1"/>
</dbReference>
<dbReference type="PANTHER" id="PTHR33162:SF1">
    <property type="entry name" value="SEC-INDEPENDENT PROTEIN TRANSLOCASE PROTEIN TATA, CHLOROPLASTIC"/>
    <property type="match status" value="1"/>
</dbReference>
<dbReference type="Pfam" id="PF02416">
    <property type="entry name" value="TatA_B_E"/>
    <property type="match status" value="1"/>
</dbReference>
<dbReference type="PRINTS" id="PR01506">
    <property type="entry name" value="TATBPROTEIN"/>
</dbReference>
<organism>
    <name type="scientific">Shewanella sp. (strain MR-4)</name>
    <dbReference type="NCBI Taxonomy" id="60480"/>
    <lineage>
        <taxon>Bacteria</taxon>
        <taxon>Pseudomonadati</taxon>
        <taxon>Pseudomonadota</taxon>
        <taxon>Gammaproteobacteria</taxon>
        <taxon>Alteromonadales</taxon>
        <taxon>Shewanellaceae</taxon>
        <taxon>Shewanella</taxon>
    </lineage>
</organism>
<reference key="1">
    <citation type="submission" date="2006-08" db="EMBL/GenBank/DDBJ databases">
        <title>Complete sequence of Shewanella sp. MR-4.</title>
        <authorList>
            <consortium name="US DOE Joint Genome Institute"/>
            <person name="Copeland A."/>
            <person name="Lucas S."/>
            <person name="Lapidus A."/>
            <person name="Barry K."/>
            <person name="Detter J.C."/>
            <person name="Glavina del Rio T."/>
            <person name="Hammon N."/>
            <person name="Israni S."/>
            <person name="Dalin E."/>
            <person name="Tice H."/>
            <person name="Pitluck S."/>
            <person name="Kiss H."/>
            <person name="Brettin T."/>
            <person name="Bruce D."/>
            <person name="Han C."/>
            <person name="Tapia R."/>
            <person name="Gilna P."/>
            <person name="Schmutz J."/>
            <person name="Larimer F."/>
            <person name="Land M."/>
            <person name="Hauser L."/>
            <person name="Kyrpides N."/>
            <person name="Mikhailova N."/>
            <person name="Nealson K."/>
            <person name="Konstantinidis K."/>
            <person name="Klappenbach J."/>
            <person name="Tiedje J."/>
            <person name="Richardson P."/>
        </authorList>
    </citation>
    <scope>NUCLEOTIDE SEQUENCE [LARGE SCALE GENOMIC DNA]</scope>
    <source>
        <strain>MR-4</strain>
    </source>
</reference>
<proteinExistence type="inferred from homology"/>
<sequence length="147" mass="15944">MFDGIGFMELLLIGVLGLVVLGPERLPVAVRSVTGWIRAMKRMANSVKEELEQELKIEQLHADLKKAESKGLSNLSPELQESIDQLKQAAQSVNRPYQVQDIPAQENQIHNPASQSVSSEASPTASSAPTSEPNQGEDTRSNPKANG</sequence>
<name>TATB_SHESM</name>
<gene>
    <name evidence="1" type="primary">tatB</name>
    <name type="ordered locus">Shewmr4_3555</name>
</gene>
<comment type="function">
    <text evidence="1">Part of the twin-arginine translocation (Tat) system that transports large folded proteins containing a characteristic twin-arginine motif in their signal peptide across membranes. Together with TatC, TatB is part of a receptor directly interacting with Tat signal peptides. TatB may form an oligomeric binding site that transiently accommodates folded Tat precursor proteins before their translocation.</text>
</comment>
<comment type="subunit">
    <text evidence="1">The Tat system comprises two distinct complexes: a TatABC complex, containing multiple copies of TatA, TatB and TatC subunits, and a separate TatA complex, containing only TatA subunits. Substrates initially bind to the TatABC complex, which probably triggers association of the separate TatA complex to form the active translocon.</text>
</comment>
<comment type="subcellular location">
    <subcellularLocation>
        <location evidence="1">Cell inner membrane</location>
        <topology evidence="1">Single-pass membrane protein</topology>
    </subcellularLocation>
</comment>
<comment type="similarity">
    <text evidence="1">Belongs to the TatB family.</text>
</comment>
<protein>
    <recommendedName>
        <fullName evidence="1">Sec-independent protein translocase protein TatB</fullName>
    </recommendedName>
</protein>
<feature type="chain" id="PRO_0000301237" description="Sec-independent protein translocase protein TatB">
    <location>
        <begin position="1"/>
        <end position="147"/>
    </location>
</feature>
<feature type="transmembrane region" description="Helical" evidence="1">
    <location>
        <begin position="2"/>
        <end position="22"/>
    </location>
</feature>
<feature type="region of interest" description="Disordered" evidence="2">
    <location>
        <begin position="68"/>
        <end position="147"/>
    </location>
</feature>
<feature type="compositionally biased region" description="Polar residues" evidence="2">
    <location>
        <begin position="71"/>
        <end position="97"/>
    </location>
</feature>
<feature type="compositionally biased region" description="Low complexity" evidence="2">
    <location>
        <begin position="112"/>
        <end position="133"/>
    </location>
</feature>